<evidence type="ECO:0000250" key="1"/>
<evidence type="ECO:0000255" key="2">
    <source>
        <dbReference type="PROSITE-ProRule" id="PRU00037"/>
    </source>
</evidence>
<evidence type="ECO:0000256" key="3">
    <source>
        <dbReference type="SAM" id="MobiDB-lite"/>
    </source>
</evidence>
<evidence type="ECO:0000269" key="4">
    <source>
    </source>
</evidence>
<accession>M3XQV7</accession>
<accession>M1EGD6</accession>
<organism>
    <name type="scientific">Mustela putorius furo</name>
    <name type="common">European domestic ferret</name>
    <name type="synonym">Mustela furo</name>
    <dbReference type="NCBI Taxonomy" id="9669"/>
    <lineage>
        <taxon>Eukaryota</taxon>
        <taxon>Metazoa</taxon>
        <taxon>Chordata</taxon>
        <taxon>Craniata</taxon>
        <taxon>Vertebrata</taxon>
        <taxon>Euteleostomi</taxon>
        <taxon>Mammalia</taxon>
        <taxon>Eutheria</taxon>
        <taxon>Laurasiatheria</taxon>
        <taxon>Carnivora</taxon>
        <taxon>Caniformia</taxon>
        <taxon>Musteloidea</taxon>
        <taxon>Mustelidae</taxon>
        <taxon>Mustelinae</taxon>
        <taxon>Mustela</taxon>
    </lineage>
</organism>
<name>BTBD3_MUSPF</name>
<gene>
    <name type="primary">BTBD3</name>
</gene>
<dbReference type="EMBL" id="AEYP01035982">
    <property type="status" value="NOT_ANNOTATED_CDS"/>
    <property type="molecule type" value="Genomic_DNA"/>
</dbReference>
<dbReference type="EMBL" id="JP006639">
    <property type="protein sequence ID" value="AER95236.1"/>
    <property type="molecule type" value="mRNA"/>
</dbReference>
<dbReference type="RefSeq" id="XP_004754269.1">
    <property type="nucleotide sequence ID" value="XM_004754212.3"/>
</dbReference>
<dbReference type="SMR" id="M3XQV7"/>
<dbReference type="STRING" id="9669.ENSMPUP00000001457"/>
<dbReference type="GeneID" id="101682009"/>
<dbReference type="KEGG" id="mpuf:101682009"/>
<dbReference type="CTD" id="22903"/>
<dbReference type="eggNOG" id="KOG2075">
    <property type="taxonomic scope" value="Eukaryota"/>
</dbReference>
<dbReference type="HOGENOM" id="CLU_015899_2_1_1"/>
<dbReference type="InParanoid" id="M3XQV7"/>
<dbReference type="OrthoDB" id="636773at2759"/>
<dbReference type="Proteomes" id="UP000000715">
    <property type="component" value="Unplaced"/>
</dbReference>
<dbReference type="GO" id="GO:0005829">
    <property type="term" value="C:cytosol"/>
    <property type="evidence" value="ECO:0000250"/>
    <property type="project" value="UniProtKB"/>
</dbReference>
<dbReference type="GO" id="GO:0005634">
    <property type="term" value="C:nucleus"/>
    <property type="evidence" value="ECO:0000250"/>
    <property type="project" value="UniProtKB"/>
</dbReference>
<dbReference type="GO" id="GO:0021987">
    <property type="term" value="P:cerebral cortex development"/>
    <property type="evidence" value="ECO:0000250"/>
    <property type="project" value="UniProtKB"/>
</dbReference>
<dbReference type="GO" id="GO:0048813">
    <property type="term" value="P:dendrite morphogenesis"/>
    <property type="evidence" value="ECO:0000250"/>
    <property type="project" value="UniProtKB"/>
</dbReference>
<dbReference type="CDD" id="cd18524">
    <property type="entry name" value="BACK_BTBD3"/>
    <property type="match status" value="1"/>
</dbReference>
<dbReference type="CDD" id="cd18348">
    <property type="entry name" value="BTB_POZ_BTBD3"/>
    <property type="match status" value="1"/>
</dbReference>
<dbReference type="FunFam" id="1.25.40.420:FF:000003">
    <property type="entry name" value="BTB/POZ domain-containing protein 3"/>
    <property type="match status" value="1"/>
</dbReference>
<dbReference type="FunFam" id="2.60.120.820:FF:000001">
    <property type="entry name" value="BTB/POZ domain-containing protein 3"/>
    <property type="match status" value="1"/>
</dbReference>
<dbReference type="FunFam" id="3.30.710.10:FF:000015">
    <property type="entry name" value="BTB/POZ domain-containing protein 3"/>
    <property type="match status" value="1"/>
</dbReference>
<dbReference type="Gene3D" id="1.25.40.420">
    <property type="match status" value="1"/>
</dbReference>
<dbReference type="Gene3D" id="2.60.120.820">
    <property type="entry name" value="PHR domain"/>
    <property type="match status" value="1"/>
</dbReference>
<dbReference type="Gene3D" id="3.30.710.10">
    <property type="entry name" value="Potassium Channel Kv1.1, Chain A"/>
    <property type="match status" value="1"/>
</dbReference>
<dbReference type="InterPro" id="IPR011705">
    <property type="entry name" value="BACK"/>
</dbReference>
<dbReference type="InterPro" id="IPR000210">
    <property type="entry name" value="BTB/POZ_dom"/>
</dbReference>
<dbReference type="InterPro" id="IPR012983">
    <property type="entry name" value="PHR"/>
</dbReference>
<dbReference type="InterPro" id="IPR038648">
    <property type="entry name" value="PHR_sf"/>
</dbReference>
<dbReference type="InterPro" id="IPR011333">
    <property type="entry name" value="SKP1/BTB/POZ_sf"/>
</dbReference>
<dbReference type="PANTHER" id="PTHR45774">
    <property type="entry name" value="BTB/POZ DOMAIN-CONTAINING"/>
    <property type="match status" value="1"/>
</dbReference>
<dbReference type="PANTHER" id="PTHR45774:SF2">
    <property type="entry name" value="BTB_POZ DOMAIN-CONTAINING PROTEIN 3"/>
    <property type="match status" value="1"/>
</dbReference>
<dbReference type="Pfam" id="PF07707">
    <property type="entry name" value="BACK"/>
    <property type="match status" value="1"/>
</dbReference>
<dbReference type="Pfam" id="PF00651">
    <property type="entry name" value="BTB"/>
    <property type="match status" value="1"/>
</dbReference>
<dbReference type="Pfam" id="PF08005">
    <property type="entry name" value="PHR"/>
    <property type="match status" value="1"/>
</dbReference>
<dbReference type="SMART" id="SM00875">
    <property type="entry name" value="BACK"/>
    <property type="match status" value="1"/>
</dbReference>
<dbReference type="SMART" id="SM00225">
    <property type="entry name" value="BTB"/>
    <property type="match status" value="1"/>
</dbReference>
<dbReference type="SUPFAM" id="SSF54695">
    <property type="entry name" value="POZ domain"/>
    <property type="match status" value="1"/>
</dbReference>
<dbReference type="PROSITE" id="PS50097">
    <property type="entry name" value="BTB"/>
    <property type="match status" value="1"/>
</dbReference>
<proteinExistence type="evidence at transcript level"/>
<reference key="1">
    <citation type="submission" date="2011-04" db="EMBL/GenBank/DDBJ databases">
        <authorList>
            <person name="Di Palma F."/>
            <person name="Alfoldi J."/>
            <person name="Johnson J."/>
            <person name="Jaffe D."/>
            <person name="Berlin A."/>
            <person name="Gnerre S."/>
            <person name="Grabherr M."/>
            <person name="Hall G."/>
            <person name="Lara M."/>
            <person name="MacCallum I."/>
            <person name="Mauceli E."/>
            <person name="Przyblyski D."/>
            <person name="Ribeiro F."/>
            <person name="Russell P."/>
            <person name="Sharpe T."/>
            <person name="Turner-Maier J."/>
            <person name="Walker B.J."/>
            <person name="Young S."/>
            <person name="Birren B."/>
            <person name="Lindblad-Toh K."/>
        </authorList>
    </citation>
    <scope>NUCLEOTIDE SEQUENCE [LARGE SCALE GENOMIC DNA]</scope>
    <source>
        <strain>ID#1420</strain>
    </source>
</reference>
<reference key="2">
    <citation type="journal article" date="2013" name="J. Virol.">
        <title>Sequencing, annotation, and characterization of the influenza ferret infectome.</title>
        <authorList>
            <person name="Leon A.J."/>
            <person name="Banner D."/>
            <person name="Xu L."/>
            <person name="Ran L."/>
            <person name="Peng Z."/>
            <person name="Yi K."/>
            <person name="Chen C."/>
            <person name="Xu F."/>
            <person name="Huang J."/>
            <person name="Zhao Z."/>
            <person name="Lin Z."/>
            <person name="Huang S.H."/>
            <person name="Fang Y."/>
            <person name="Kelvin A.A."/>
            <person name="Ross T.M."/>
            <person name="Farooqui A."/>
            <person name="Kelvin D.J."/>
        </authorList>
    </citation>
    <scope>NUCLEOTIDE SEQUENCE [MRNA] OF 44-532</scope>
    <source>
        <tissue>Lung</tissue>
    </source>
</reference>
<reference key="3">
    <citation type="journal article" date="2013" name="Science">
        <title>BTBD3 controls dendrite orientation toward active axons in mammalian neocortex.</title>
        <authorList>
            <person name="Matsui A."/>
            <person name="Tran M."/>
            <person name="Yoshida A.C."/>
            <person name="Kikuchi S.S."/>
            <person name="U M."/>
            <person name="Ogawa M."/>
            <person name="Shimogori T."/>
        </authorList>
    </citation>
    <scope>FUNCTION</scope>
    <scope>TISSUE SPECIFICITY</scope>
</reference>
<feature type="chain" id="PRO_0000425205" description="BTB/POZ domain-containing protein 3">
    <location>
        <begin position="1"/>
        <end position="532"/>
    </location>
</feature>
<feature type="domain" description="BTB" evidence="2">
    <location>
        <begin position="130"/>
        <end position="200"/>
    </location>
</feature>
<feature type="domain" description="BACK">
    <location>
        <begin position="245"/>
        <end position="310"/>
    </location>
</feature>
<feature type="region of interest" description="Disordered" evidence="3">
    <location>
        <begin position="23"/>
        <end position="54"/>
    </location>
</feature>
<feature type="compositionally biased region" description="Low complexity" evidence="3">
    <location>
        <begin position="43"/>
        <end position="53"/>
    </location>
</feature>
<keyword id="KW-0963">Cytoplasm</keyword>
<keyword id="KW-0524">Neurogenesis</keyword>
<keyword id="KW-0539">Nucleus</keyword>
<keyword id="KW-1185">Reference proteome</keyword>
<sequence length="532" mass="59163">MVDDKEKNMKCLTFFLMLPETVKNRSKKSSKKTNTGGGGGGSSSSSSSSSNSKLPPVCYEIITLKTKKKKKMAADIFPRKKPANSSSTTVQQYHQQNLSNNNLIPAPNWQGLYPTIRERNAVMFNNDLMADVHFVVGPPGGTQRLPGHKYVLAVGSSVFHAMFYGELAEDKDEIRIPDVEPAAFLAMLKYIYCDEIDLAADTVLATLYAAKKYIVPHLARACVNFLETSLSAKNACVLLSQSCLFEEPDLTQRCWEVIDAQAELALKSEGFCDIDFQTLESILRRETLNAKEIVVFEAALNWAEVECQRQDLALSIENKRKVLGKALYLIRIPTMALDDFANGAAQSGVLTLNETNDIFLWYTAAKKPELQFVSKARKGLVPQRCHRFQSCAYRSNQWRYRGRCDSIQFAVDKRVFIAGFGLYGSSCGSAEYSAKIELKRQGVVLGQNLSKYFSDGSSNTFPVWFEYPVQIEPDTFYTASVILDGNELSYFGQEGMTEVQCGKVTVQFQCSSDSTNGTGVQGGQIPELIFYA</sequence>
<comment type="function">
    <text evidence="4">Acts as a key regulator of dendritic field orientation during development of sensory cortex. Also directs dendrites toward active axon terminals when ectopically expressed.</text>
</comment>
<comment type="subcellular location">
    <subcellularLocation>
        <location evidence="1">Cytoplasm</location>
        <location evidence="1">Cytosol</location>
    </subcellularLocation>
    <subcellularLocation>
        <location evidence="1">Nucleus</location>
    </subcellularLocation>
    <text evidence="1">Translocates from the cytosol to the nucleus in response to neuronal activity.</text>
</comment>
<comment type="tissue specificity">
    <text evidence="4">Expressed in visual cortex. Expressed in visual cortex layer IV neurons.</text>
</comment>
<protein>
    <recommendedName>
        <fullName>BTB/POZ domain-containing protein 3</fullName>
    </recommendedName>
</protein>